<organism>
    <name type="scientific">Psychromonas ingrahamii (strain DSM 17664 / CCUG 51855 / 37)</name>
    <dbReference type="NCBI Taxonomy" id="357804"/>
    <lineage>
        <taxon>Bacteria</taxon>
        <taxon>Pseudomonadati</taxon>
        <taxon>Pseudomonadota</taxon>
        <taxon>Gammaproteobacteria</taxon>
        <taxon>Alteromonadales</taxon>
        <taxon>Psychromonadaceae</taxon>
        <taxon>Psychromonas</taxon>
    </lineage>
</organism>
<reference key="1">
    <citation type="journal article" date="2008" name="BMC Genomics">
        <title>Genomics of an extreme psychrophile, Psychromonas ingrahamii.</title>
        <authorList>
            <person name="Riley M."/>
            <person name="Staley J.T."/>
            <person name="Danchin A."/>
            <person name="Wang T.Z."/>
            <person name="Brettin T.S."/>
            <person name="Hauser L.J."/>
            <person name="Land M.L."/>
            <person name="Thompson L.S."/>
        </authorList>
    </citation>
    <scope>NUCLEOTIDE SEQUENCE [LARGE SCALE GENOMIC DNA]</scope>
    <source>
        <strain>DSM 17664 / CCUG 51855 / 37</strain>
    </source>
</reference>
<protein>
    <recommendedName>
        <fullName evidence="1">Probable nicotinate-nucleotide adenylyltransferase</fullName>
        <ecNumber evidence="1">2.7.7.18</ecNumber>
    </recommendedName>
    <alternativeName>
        <fullName evidence="1">Deamido-NAD(+) diphosphorylase</fullName>
    </alternativeName>
    <alternativeName>
        <fullName evidence="1">Deamido-NAD(+) pyrophosphorylase</fullName>
    </alternativeName>
    <alternativeName>
        <fullName evidence="1">Nicotinate mononucleotide adenylyltransferase</fullName>
        <shortName evidence="1">NaMN adenylyltransferase</shortName>
    </alternativeName>
</protein>
<name>NADD_PSYIN</name>
<proteinExistence type="inferred from homology"/>
<accession>A1SU57</accession>
<dbReference type="EC" id="2.7.7.18" evidence="1"/>
<dbReference type="EMBL" id="CP000510">
    <property type="protein sequence ID" value="ABM03022.1"/>
    <property type="molecule type" value="Genomic_DNA"/>
</dbReference>
<dbReference type="RefSeq" id="WP_011769585.1">
    <property type="nucleotide sequence ID" value="NC_008709.1"/>
</dbReference>
<dbReference type="SMR" id="A1SU57"/>
<dbReference type="STRING" id="357804.Ping_1188"/>
<dbReference type="KEGG" id="pin:Ping_1188"/>
<dbReference type="eggNOG" id="COG1057">
    <property type="taxonomic scope" value="Bacteria"/>
</dbReference>
<dbReference type="HOGENOM" id="CLU_069765_0_0_6"/>
<dbReference type="OrthoDB" id="5295945at2"/>
<dbReference type="UniPathway" id="UPA00253">
    <property type="reaction ID" value="UER00332"/>
</dbReference>
<dbReference type="Proteomes" id="UP000000639">
    <property type="component" value="Chromosome"/>
</dbReference>
<dbReference type="GO" id="GO:0005524">
    <property type="term" value="F:ATP binding"/>
    <property type="evidence" value="ECO:0007669"/>
    <property type="project" value="UniProtKB-KW"/>
</dbReference>
<dbReference type="GO" id="GO:0004515">
    <property type="term" value="F:nicotinate-nucleotide adenylyltransferase activity"/>
    <property type="evidence" value="ECO:0007669"/>
    <property type="project" value="UniProtKB-UniRule"/>
</dbReference>
<dbReference type="GO" id="GO:0009435">
    <property type="term" value="P:NAD biosynthetic process"/>
    <property type="evidence" value="ECO:0007669"/>
    <property type="project" value="UniProtKB-UniRule"/>
</dbReference>
<dbReference type="CDD" id="cd02165">
    <property type="entry name" value="NMNAT"/>
    <property type="match status" value="1"/>
</dbReference>
<dbReference type="Gene3D" id="3.40.50.620">
    <property type="entry name" value="HUPs"/>
    <property type="match status" value="1"/>
</dbReference>
<dbReference type="HAMAP" id="MF_00244">
    <property type="entry name" value="NaMN_adenylyltr"/>
    <property type="match status" value="1"/>
</dbReference>
<dbReference type="InterPro" id="IPR004821">
    <property type="entry name" value="Cyt_trans-like"/>
</dbReference>
<dbReference type="InterPro" id="IPR005248">
    <property type="entry name" value="NadD/NMNAT"/>
</dbReference>
<dbReference type="InterPro" id="IPR014729">
    <property type="entry name" value="Rossmann-like_a/b/a_fold"/>
</dbReference>
<dbReference type="NCBIfam" id="TIGR00125">
    <property type="entry name" value="cyt_tran_rel"/>
    <property type="match status" value="1"/>
</dbReference>
<dbReference type="NCBIfam" id="TIGR00482">
    <property type="entry name" value="nicotinate (nicotinamide) nucleotide adenylyltransferase"/>
    <property type="match status" value="1"/>
</dbReference>
<dbReference type="NCBIfam" id="NF000839">
    <property type="entry name" value="PRK00071.1-1"/>
    <property type="match status" value="1"/>
</dbReference>
<dbReference type="NCBIfam" id="NF000840">
    <property type="entry name" value="PRK00071.1-3"/>
    <property type="match status" value="1"/>
</dbReference>
<dbReference type="PANTHER" id="PTHR39321">
    <property type="entry name" value="NICOTINATE-NUCLEOTIDE ADENYLYLTRANSFERASE-RELATED"/>
    <property type="match status" value="1"/>
</dbReference>
<dbReference type="PANTHER" id="PTHR39321:SF3">
    <property type="entry name" value="PHOSPHOPANTETHEINE ADENYLYLTRANSFERASE"/>
    <property type="match status" value="1"/>
</dbReference>
<dbReference type="Pfam" id="PF01467">
    <property type="entry name" value="CTP_transf_like"/>
    <property type="match status" value="1"/>
</dbReference>
<dbReference type="SUPFAM" id="SSF52374">
    <property type="entry name" value="Nucleotidylyl transferase"/>
    <property type="match status" value="1"/>
</dbReference>
<evidence type="ECO:0000255" key="1">
    <source>
        <dbReference type="HAMAP-Rule" id="MF_00244"/>
    </source>
</evidence>
<gene>
    <name evidence="1" type="primary">nadD</name>
    <name type="ordered locus">Ping_1188</name>
</gene>
<keyword id="KW-0067">ATP-binding</keyword>
<keyword id="KW-0520">NAD</keyword>
<keyword id="KW-0547">Nucleotide-binding</keyword>
<keyword id="KW-0548">Nucleotidyltransferase</keyword>
<keyword id="KW-0662">Pyridine nucleotide biosynthesis</keyword>
<keyword id="KW-1185">Reference proteome</keyword>
<keyword id="KW-0808">Transferase</keyword>
<feature type="chain" id="PRO_0000336725" description="Probable nicotinate-nucleotide adenylyltransferase">
    <location>
        <begin position="1"/>
        <end position="214"/>
    </location>
</feature>
<comment type="function">
    <text evidence="1">Catalyzes the reversible adenylation of nicotinate mononucleotide (NaMN) to nicotinic acid adenine dinucleotide (NaAD).</text>
</comment>
<comment type="catalytic activity">
    <reaction evidence="1">
        <text>nicotinate beta-D-ribonucleotide + ATP + H(+) = deamido-NAD(+) + diphosphate</text>
        <dbReference type="Rhea" id="RHEA:22860"/>
        <dbReference type="ChEBI" id="CHEBI:15378"/>
        <dbReference type="ChEBI" id="CHEBI:30616"/>
        <dbReference type="ChEBI" id="CHEBI:33019"/>
        <dbReference type="ChEBI" id="CHEBI:57502"/>
        <dbReference type="ChEBI" id="CHEBI:58437"/>
        <dbReference type="EC" id="2.7.7.18"/>
    </reaction>
</comment>
<comment type="pathway">
    <text evidence="1">Cofactor biosynthesis; NAD(+) biosynthesis; deamido-NAD(+) from nicotinate D-ribonucleotide: step 1/1.</text>
</comment>
<comment type="similarity">
    <text evidence="1">Belongs to the NadD family.</text>
</comment>
<sequence>MDIQQQAIGFLGGTFDPIHFGHLRPALEITEALSLQQLFIMPNHIAPHKSASHASARQRSEMVELAISHQARMTIDKRELKRHKPSYTIDTLKELKIEYPNTPICFIMGMDSLISFDKWFDWKSILSYCHLIISHRPGWQNKFNKQVGALVAKHQTTDKHDLHNIQFGKIYFQATSQLAISSTEIRTLLNQDISIDFLTPDSVINYIKEQHLYK</sequence>